<comment type="function">
    <text evidence="1 4">DNA-dependent RNA polymerase (RNAP) catalyzes the transcription of DNA into RNA using the four ribonucleoside triphosphates as substrates.</text>
</comment>
<comment type="catalytic activity">
    <reaction evidence="1 4">
        <text>RNA(n) + a ribonucleoside 5'-triphosphate = RNA(n+1) + diphosphate</text>
        <dbReference type="Rhea" id="RHEA:21248"/>
        <dbReference type="Rhea" id="RHEA-COMP:14527"/>
        <dbReference type="Rhea" id="RHEA-COMP:17342"/>
        <dbReference type="ChEBI" id="CHEBI:33019"/>
        <dbReference type="ChEBI" id="CHEBI:61557"/>
        <dbReference type="ChEBI" id="CHEBI:140395"/>
        <dbReference type="EC" id="2.7.7.6"/>
    </reaction>
</comment>
<comment type="cofactor">
    <cofactor evidence="1 3 8 9 10">
        <name>[3Fe-4S] cluster</name>
        <dbReference type="ChEBI" id="CHEBI:21137"/>
    </cofactor>
    <text evidence="1 3 8 9 10">Binds 1 [3Fe-4S] cluster.</text>
</comment>
<comment type="cofactor">
    <cofactor evidence="7">
        <name>Zn(2+)</name>
        <dbReference type="ChEBI" id="CHEBI:29105"/>
    </cofactor>
    <text evidence="7">May bind 1 Zn(2+) cofactor that does not appear in the structures.</text>
</comment>
<comment type="subunit">
    <text evidence="2 3 4 8 9 10">Part of the 13-subunit RNA polymerase.</text>
</comment>
<comment type="subcellular location">
    <subcellularLocation>
        <location evidence="1">Cytoplasm</location>
    </subcellularLocation>
</comment>
<comment type="similarity">
    <text evidence="1">Belongs to the archaeal Rpo3/eukaryotic RPB3 RNA polymerase subunit family.</text>
</comment>
<comment type="caution">
    <text evidence="6">X-ray crystallography in other archaea shows this protein binds a 3Fe-4S cluster, although a 4Fe-4S cluster has been suggested to be present in this protein.</text>
</comment>
<evidence type="ECO:0000255" key="1">
    <source>
        <dbReference type="HAMAP-Rule" id="MF_00320"/>
    </source>
</evidence>
<evidence type="ECO:0000269" key="2">
    <source>
    </source>
</evidence>
<evidence type="ECO:0000269" key="3">
    <source>
    </source>
</evidence>
<evidence type="ECO:0000269" key="4">
    <source ref="4"/>
</evidence>
<evidence type="ECO:0000303" key="5">
    <source>
    </source>
</evidence>
<evidence type="ECO:0000305" key="6"/>
<evidence type="ECO:0000305" key="7">
    <source>
    </source>
</evidence>
<evidence type="ECO:0000312" key="8">
    <source>
        <dbReference type="PDB" id="7OK0"/>
    </source>
</evidence>
<evidence type="ECO:0000312" key="9">
    <source>
        <dbReference type="PDB" id="7OQ4"/>
    </source>
</evidence>
<evidence type="ECO:0000312" key="10">
    <source>
        <dbReference type="PDB" id="7OQY"/>
    </source>
</evidence>
<evidence type="ECO:0007744" key="11">
    <source>
        <dbReference type="PDB" id="7OK0"/>
    </source>
</evidence>
<evidence type="ECO:0007744" key="12">
    <source>
        <dbReference type="PDB" id="7OQ4"/>
    </source>
</evidence>
<evidence type="ECO:0007744" key="13">
    <source>
        <dbReference type="PDB" id="7OQY"/>
    </source>
</evidence>
<evidence type="ECO:0007829" key="14">
    <source>
        <dbReference type="PDB" id="7OK0"/>
    </source>
</evidence>
<evidence type="ECO:0007829" key="15">
    <source>
        <dbReference type="PDB" id="7OQY"/>
    </source>
</evidence>
<feature type="chain" id="PRO_0000132764" description="DNA-directed RNA polymerase subunit Rpo3">
    <location>
        <begin position="1"/>
        <end position="264"/>
    </location>
</feature>
<feature type="binding site" evidence="7">
    <location>
        <position position="82"/>
    </location>
    <ligand>
        <name>Zn(2+)</name>
        <dbReference type="ChEBI" id="CHEBI:29105"/>
    </ligand>
</feature>
<feature type="binding site" evidence="7">
    <location>
        <position position="85"/>
    </location>
    <ligand>
        <name>Zn(2+)</name>
        <dbReference type="ChEBI" id="CHEBI:29105"/>
    </ligand>
</feature>
<feature type="binding site" evidence="7">
    <location>
        <position position="89"/>
    </location>
    <ligand>
        <name>Zn(2+)</name>
        <dbReference type="ChEBI" id="CHEBI:29105"/>
    </ligand>
</feature>
<feature type="binding site" evidence="7">
    <location>
        <position position="92"/>
    </location>
    <ligand>
        <name>Zn(2+)</name>
        <dbReference type="ChEBI" id="CHEBI:29105"/>
    </ligand>
</feature>
<feature type="binding site" evidence="3 8">
    <location>
        <position position="183"/>
    </location>
    <ligand>
        <name>[3Fe-4S] cluster</name>
        <dbReference type="ChEBI" id="CHEBI:21137"/>
    </ligand>
</feature>
<feature type="binding site" evidence="1 3 8">
    <location>
        <position position="203"/>
    </location>
    <ligand>
        <name>[3Fe-4S] cluster</name>
        <dbReference type="ChEBI" id="CHEBI:21137"/>
    </ligand>
</feature>
<feature type="binding site" evidence="1 3 8">
    <location>
        <position position="206"/>
    </location>
    <ligand>
        <name>[3Fe-4S] cluster</name>
        <dbReference type="ChEBI" id="CHEBI:21137"/>
    </ligand>
</feature>
<feature type="binding site" evidence="3 8">
    <location>
        <position position="207"/>
    </location>
    <ligand>
        <name>[3Fe-4S] cluster</name>
        <dbReference type="ChEBI" id="CHEBI:21137"/>
    </ligand>
</feature>
<feature type="binding site" evidence="1 3 8">
    <location>
        <position position="209"/>
    </location>
    <ligand>
        <name>[3Fe-4S] cluster</name>
        <dbReference type="ChEBI" id="CHEBI:21137"/>
    </ligand>
</feature>
<feature type="sequence conflict" description="In Ref. 1; CAA56480." evidence="6" ref="1">
    <original>P</original>
    <variation>S</variation>
    <location>
        <position position="106"/>
    </location>
</feature>
<feature type="strand" evidence="15">
    <location>
        <begin position="3"/>
        <end position="9"/>
    </location>
</feature>
<feature type="strand" evidence="15">
    <location>
        <begin position="12"/>
        <end position="19"/>
    </location>
</feature>
<feature type="helix" evidence="15">
    <location>
        <begin position="22"/>
        <end position="34"/>
    </location>
</feature>
<feature type="strand" evidence="15">
    <location>
        <begin position="38"/>
        <end position="49"/>
    </location>
</feature>
<feature type="strand" evidence="15">
    <location>
        <begin position="51"/>
        <end position="53"/>
    </location>
</feature>
<feature type="helix" evidence="15">
    <location>
        <begin position="55"/>
        <end position="63"/>
    </location>
</feature>
<feature type="helix" evidence="15">
    <location>
        <begin position="72"/>
        <end position="75"/>
    </location>
</feature>
<feature type="helix" evidence="15">
    <location>
        <begin position="79"/>
        <end position="81"/>
    </location>
</feature>
<feature type="turn" evidence="15">
    <location>
        <begin position="90"/>
        <end position="92"/>
    </location>
</feature>
<feature type="strand" evidence="15">
    <location>
        <begin position="94"/>
        <end position="101"/>
    </location>
</feature>
<feature type="strand" evidence="14">
    <location>
        <begin position="103"/>
        <end position="105"/>
    </location>
</feature>
<feature type="strand" evidence="15">
    <location>
        <begin position="107"/>
        <end position="109"/>
    </location>
</feature>
<feature type="helix" evidence="15">
    <location>
        <begin position="111"/>
        <end position="113"/>
    </location>
</feature>
<feature type="strand" evidence="15">
    <location>
        <begin position="115"/>
        <end position="118"/>
    </location>
</feature>
<feature type="strand" evidence="15">
    <location>
        <begin position="131"/>
        <end position="133"/>
    </location>
</feature>
<feature type="strand" evidence="15">
    <location>
        <begin position="138"/>
        <end position="148"/>
    </location>
</feature>
<feature type="turn" evidence="15">
    <location>
        <begin position="150"/>
        <end position="152"/>
    </location>
</feature>
<feature type="helix" evidence="15">
    <location>
        <begin position="154"/>
        <end position="156"/>
    </location>
</feature>
<feature type="strand" evidence="15">
    <location>
        <begin position="158"/>
        <end position="172"/>
    </location>
</feature>
<feature type="helix" evidence="15">
    <location>
        <begin position="178"/>
        <end position="182"/>
    </location>
</feature>
<feature type="strand" evidence="15">
    <location>
        <begin position="188"/>
        <end position="198"/>
    </location>
</feature>
<feature type="helix" evidence="14">
    <location>
        <begin position="200"/>
        <end position="202"/>
    </location>
</feature>
<feature type="helix" evidence="15">
    <location>
        <begin position="208"/>
        <end position="211"/>
    </location>
</feature>
<feature type="turn" evidence="15">
    <location>
        <begin position="214"/>
        <end position="216"/>
    </location>
</feature>
<feature type="strand" evidence="15">
    <location>
        <begin position="217"/>
        <end position="232"/>
    </location>
</feature>
<feature type="strand" evidence="15">
    <location>
        <begin position="234"/>
        <end position="236"/>
    </location>
</feature>
<feature type="helix" evidence="15">
    <location>
        <begin position="238"/>
        <end position="261"/>
    </location>
</feature>
<organism>
    <name type="scientific">Sulfolobus acidocaldarius (strain ATCC 33909 / DSM 639 / JCM 8929 / NBRC 15157 / NCIMB 11770)</name>
    <dbReference type="NCBI Taxonomy" id="330779"/>
    <lineage>
        <taxon>Archaea</taxon>
        <taxon>Thermoproteota</taxon>
        <taxon>Thermoprotei</taxon>
        <taxon>Sulfolobales</taxon>
        <taxon>Sulfolobaceae</taxon>
        <taxon>Sulfolobus</taxon>
    </lineage>
</organism>
<sequence>MPISLIERNGLRLRLVLENYPLEFVNSIRRASILYVPVMAVDEVYFIENNSPLYDEILAHRLALVPFVSDEALEHYRPPEECAECKENCDGCYNRVYLDVEAKDQPLMIYSRDLKSEDQMITPVSGAIPIVLLGSKQKISLEARLRLGYGKEHIKYSPVSVSIVRYYPKVTVLGNCEKAVEVCPEGVFAMENNKLVVKNELSCILCEECLKYCAGSVSIESVENKFILEIESVGSLKPERILIEASKSLLRKLSELKSKLEAGK</sequence>
<accession>P39471</accession>
<accession>Q4JCG9</accession>
<keyword id="KW-0002">3D-structure</keyword>
<keyword id="KW-0003">3Fe-4S</keyword>
<keyword id="KW-0963">Cytoplasm</keyword>
<keyword id="KW-0240">DNA-directed RNA polymerase</keyword>
<keyword id="KW-0408">Iron</keyword>
<keyword id="KW-0411">Iron-sulfur</keyword>
<keyword id="KW-0479">Metal-binding</keyword>
<keyword id="KW-0548">Nucleotidyltransferase</keyword>
<keyword id="KW-1185">Reference proteome</keyword>
<keyword id="KW-0804">Transcription</keyword>
<keyword id="KW-0808">Transferase</keyword>
<keyword id="KW-0862">Zinc</keyword>
<reference key="1">
    <citation type="journal article" date="1995" name="Proc. Natl. Acad. Sci. U.S.A.">
        <title>Transcription in archaea: similarity to that in eucarya.</title>
        <authorList>
            <person name="Langer D."/>
            <person name="Hain J."/>
            <person name="Thuriaux P."/>
            <person name="Zillig W."/>
        </authorList>
    </citation>
    <scope>NUCLEOTIDE SEQUENCE [GENOMIC DNA]</scope>
    <source>
        <strain>ATCC 33909 / DSM 639 / JCM 8929 / NBRC 15157 / NCIMB 11770</strain>
    </source>
</reference>
<reference key="2">
    <citation type="journal article" date="2005" name="J. Bacteriol.">
        <title>The genome of Sulfolobus acidocaldarius, a model organism of the Crenarchaeota.</title>
        <authorList>
            <person name="Chen L."/>
            <person name="Bruegger K."/>
            <person name="Skovgaard M."/>
            <person name="Redder P."/>
            <person name="She Q."/>
            <person name="Torarinsson E."/>
            <person name="Greve B."/>
            <person name="Awayez M."/>
            <person name="Zibat A."/>
            <person name="Klenk H.-P."/>
            <person name="Garrett R.A."/>
        </authorList>
    </citation>
    <scope>NUCLEOTIDE SEQUENCE [LARGE SCALE GENOMIC DNA]</scope>
    <source>
        <strain>ATCC 33909 / DSM 639 / JCM 8929 / NBRC 15157 / NCIMB 11770</strain>
    </source>
</reference>
<reference key="3">
    <citation type="journal article" date="1992" name="Proc. Natl. Acad. Sci. U.S.A.">
        <title>Component H of the DNA-dependent RNA polymerases of Archaea is homologous to a subunit shared by the three eucaryal nuclear RNA polymerases.</title>
        <authorList>
            <person name="Klenk H.-P."/>
            <person name="Palm P."/>
            <person name="Lottspeich F."/>
            <person name="Zillig W."/>
        </authorList>
    </citation>
    <scope>SUBUNIT</scope>
    <source>
        <strain>ATCC 33909 / DSM 639 / JCM 8929 / NBRC 15157 / NCIMB 11770</strain>
    </source>
</reference>
<reference key="4">
    <citation type="journal article" date="1994" name="Syst. Appl. Microbiol.">
        <title>Structure and Function of the DNA-Dependent RNA Polymerase of Sulfolobus.</title>
        <authorList>
            <person name="Lanzendorfer M."/>
            <person name="Langer D."/>
            <person name="Hain J."/>
            <person name="Klenk H.-P."/>
            <person name="Holz I."/>
            <person name="Arnold-Ammer I."/>
            <person name="Zillig W."/>
        </authorList>
    </citation>
    <scope>FUNCTION</scope>
    <scope>CATALYTIC ACTIVITY</scope>
    <scope>SUBUNIT</scope>
    <source>
        <strain>ATCC 33909 / DSM 639 / JCM 8929 / NBRC 15157 / NCIMB 11770</strain>
    </source>
</reference>
<reference evidence="11 12 13" key="5">
    <citation type="journal article" date="2021" name="Nat. Commun.">
        <title>Structural basis of RNA polymerase inhibition by viral and host factors.</title>
        <authorList>
            <person name="Pilotto S."/>
            <person name="Fouqueau T."/>
            <person name="Lukoyanova N."/>
            <person name="Sheppard C."/>
            <person name="Lucas-Staat S."/>
            <person name="Diaz-Santin L.M."/>
            <person name="Matelska D."/>
            <person name="Prangishvili D."/>
            <person name="Cheung A.C.M."/>
            <person name="Werner F."/>
        </authorList>
    </citation>
    <scope>STRUCTURE BY ELECTRON MICROSCOPY (2.61 ANGSTROMS) OF RNAP WITH AND WITHOUT INHIBITORS</scope>
    <scope>3FE-4S COFACTOR</scope>
    <scope>POSSIBLE ZINC COFACTOR</scope>
    <scope>SUBUNIT</scope>
</reference>
<gene>
    <name evidence="1" type="primary">rpo3</name>
    <name evidence="1 5" type="synonym">rpoD</name>
    <name type="ordered locus">Saci_0083</name>
</gene>
<protein>
    <recommendedName>
        <fullName evidence="1">DNA-directed RNA polymerase subunit Rpo3</fullName>
        <ecNumber evidence="1 4">2.7.7.6</ecNumber>
    </recommendedName>
    <alternativeName>
        <fullName evidence="1 5">DNA-directed RNA polymerase subunit D</fullName>
    </alternativeName>
</protein>
<dbReference type="EC" id="2.7.7.6" evidence="1 4"/>
<dbReference type="EMBL" id="X80194">
    <property type="protein sequence ID" value="CAA56480.1"/>
    <property type="molecule type" value="Genomic_DNA"/>
</dbReference>
<dbReference type="EMBL" id="CP000077">
    <property type="protein sequence ID" value="AAY79510.1"/>
    <property type="molecule type" value="Genomic_DNA"/>
</dbReference>
<dbReference type="PIR" id="S47023">
    <property type="entry name" value="S47023"/>
</dbReference>
<dbReference type="RefSeq" id="WP_011277011.1">
    <property type="nucleotide sequence ID" value="NC_007181.1"/>
</dbReference>
<dbReference type="PDB" id="7OK0">
    <property type="method" value="EM"/>
    <property type="resolution" value="2.90 A"/>
    <property type="chains" value="D=1-264"/>
</dbReference>
<dbReference type="PDB" id="7OQ4">
    <property type="method" value="EM"/>
    <property type="resolution" value="3.27 A"/>
    <property type="chains" value="D=1-264"/>
</dbReference>
<dbReference type="PDB" id="7OQY">
    <property type="method" value="EM"/>
    <property type="resolution" value="2.61 A"/>
    <property type="chains" value="D=1-264"/>
</dbReference>
<dbReference type="PDBsum" id="7OK0"/>
<dbReference type="PDBsum" id="7OQ4"/>
<dbReference type="PDBsum" id="7OQY"/>
<dbReference type="EMDB" id="EMD-12960"/>
<dbReference type="EMDB" id="EMD-13026"/>
<dbReference type="EMDB" id="EMD-13034"/>
<dbReference type="SMR" id="P39471"/>
<dbReference type="STRING" id="330779.Saci_0083"/>
<dbReference type="GeneID" id="14550613"/>
<dbReference type="KEGG" id="sai:Saci_0083"/>
<dbReference type="PATRIC" id="fig|330779.12.peg.77"/>
<dbReference type="eggNOG" id="arCOG04241">
    <property type="taxonomic scope" value="Archaea"/>
</dbReference>
<dbReference type="HOGENOM" id="CLU_038421_3_1_2"/>
<dbReference type="Proteomes" id="UP000001018">
    <property type="component" value="Chromosome"/>
</dbReference>
<dbReference type="GO" id="GO:0005737">
    <property type="term" value="C:cytoplasm"/>
    <property type="evidence" value="ECO:0007669"/>
    <property type="project" value="UniProtKB-SubCell"/>
</dbReference>
<dbReference type="GO" id="GO:0000428">
    <property type="term" value="C:DNA-directed RNA polymerase complex"/>
    <property type="evidence" value="ECO:0000314"/>
    <property type="project" value="UniProtKB"/>
</dbReference>
<dbReference type="GO" id="GO:0051538">
    <property type="term" value="F:3 iron, 4 sulfur cluster binding"/>
    <property type="evidence" value="ECO:0007669"/>
    <property type="project" value="UniProtKB-KW"/>
</dbReference>
<dbReference type="GO" id="GO:0003677">
    <property type="term" value="F:DNA binding"/>
    <property type="evidence" value="ECO:0007669"/>
    <property type="project" value="UniProtKB-UniRule"/>
</dbReference>
<dbReference type="GO" id="GO:0003899">
    <property type="term" value="F:DNA-directed RNA polymerase activity"/>
    <property type="evidence" value="ECO:0000314"/>
    <property type="project" value="UniProtKB"/>
</dbReference>
<dbReference type="GO" id="GO:0046872">
    <property type="term" value="F:metal ion binding"/>
    <property type="evidence" value="ECO:0007669"/>
    <property type="project" value="UniProtKB-KW"/>
</dbReference>
<dbReference type="GO" id="GO:0046983">
    <property type="term" value="F:protein dimerization activity"/>
    <property type="evidence" value="ECO:0007669"/>
    <property type="project" value="InterPro"/>
</dbReference>
<dbReference type="GO" id="GO:0006351">
    <property type="term" value="P:DNA-templated transcription"/>
    <property type="evidence" value="ECO:0000314"/>
    <property type="project" value="UniProtKB"/>
</dbReference>
<dbReference type="CDD" id="cd07030">
    <property type="entry name" value="RNAP_D"/>
    <property type="match status" value="1"/>
</dbReference>
<dbReference type="Gene3D" id="3.30.70.20">
    <property type="match status" value="1"/>
</dbReference>
<dbReference type="Gene3D" id="2.170.120.12">
    <property type="entry name" value="DNA-directed RNA polymerase, insert domain"/>
    <property type="match status" value="1"/>
</dbReference>
<dbReference type="Gene3D" id="3.30.1360.10">
    <property type="entry name" value="RNA polymerase, RBP11-like subunit"/>
    <property type="match status" value="1"/>
</dbReference>
<dbReference type="HAMAP" id="MF_00320">
    <property type="entry name" value="RNApol_arch_Rpo3"/>
    <property type="match status" value="1"/>
</dbReference>
<dbReference type="InterPro" id="IPR001514">
    <property type="entry name" value="DNA-dir_RNA_pol_30-40kDasu_CS"/>
</dbReference>
<dbReference type="InterPro" id="IPR011262">
    <property type="entry name" value="DNA-dir_RNA_pol_insert"/>
</dbReference>
<dbReference type="InterPro" id="IPR011263">
    <property type="entry name" value="DNA-dir_RNA_pol_RpoA/D/Rpb3"/>
</dbReference>
<dbReference type="InterPro" id="IPR036603">
    <property type="entry name" value="RBP11-like"/>
</dbReference>
<dbReference type="InterPro" id="IPR022842">
    <property type="entry name" value="RNAP_Rpo3/Rpb3/RPAC1"/>
</dbReference>
<dbReference type="InterPro" id="IPR036643">
    <property type="entry name" value="RNApol_insert_sf"/>
</dbReference>
<dbReference type="InterPro" id="IPR050518">
    <property type="entry name" value="Rpo3/RPB3_RNA_Pol_subunit"/>
</dbReference>
<dbReference type="NCBIfam" id="NF001988">
    <property type="entry name" value="PRK00783.1"/>
    <property type="match status" value="1"/>
</dbReference>
<dbReference type="PANTHER" id="PTHR11800">
    <property type="entry name" value="DNA-DIRECTED RNA POLYMERASE"/>
    <property type="match status" value="1"/>
</dbReference>
<dbReference type="PANTHER" id="PTHR11800:SF2">
    <property type="entry name" value="DNA-DIRECTED RNA POLYMERASE II SUBUNIT RPB3"/>
    <property type="match status" value="1"/>
</dbReference>
<dbReference type="Pfam" id="PF01000">
    <property type="entry name" value="RNA_pol_A_bac"/>
    <property type="match status" value="1"/>
</dbReference>
<dbReference type="Pfam" id="PF01193">
    <property type="entry name" value="RNA_pol_L"/>
    <property type="match status" value="1"/>
</dbReference>
<dbReference type="SMART" id="SM00662">
    <property type="entry name" value="RPOLD"/>
    <property type="match status" value="1"/>
</dbReference>
<dbReference type="SUPFAM" id="SSF56553">
    <property type="entry name" value="Insert subdomain of RNA polymerase alpha subunit"/>
    <property type="match status" value="1"/>
</dbReference>
<dbReference type="SUPFAM" id="SSF55257">
    <property type="entry name" value="RBP11-like subunits of RNA polymerase"/>
    <property type="match status" value="1"/>
</dbReference>
<dbReference type="PROSITE" id="PS00446">
    <property type="entry name" value="RNA_POL_D_30KD"/>
    <property type="match status" value="1"/>
</dbReference>
<proteinExistence type="evidence at protein level"/>
<name>RPO3_SULAC</name>